<name>ALS1_CANAL</name>
<dbReference type="EMBL" id="CP017628">
    <property type="protein sequence ID" value="AOW30297.1"/>
    <property type="molecule type" value="Genomic_DNA"/>
</dbReference>
<dbReference type="RefSeq" id="XP_718077.1">
    <property type="nucleotide sequence ID" value="XM_712984.2"/>
</dbReference>
<dbReference type="SMR" id="Q5A8T4"/>
<dbReference type="BioGRID" id="1223374">
    <property type="interactions" value="10"/>
</dbReference>
<dbReference type="STRING" id="237561.Q5A8T4"/>
<dbReference type="GlyCosmos" id="Q5A8T4">
    <property type="glycosylation" value="15 sites, No reported glycans"/>
</dbReference>
<dbReference type="EnsemblFungi" id="C6_03700W_A-T">
    <property type="protein sequence ID" value="C6_03700W_A-T-p1"/>
    <property type="gene ID" value="C6_03700W_A"/>
</dbReference>
<dbReference type="GeneID" id="3640280"/>
<dbReference type="KEGG" id="cal:CAALFM_C603700WA"/>
<dbReference type="CGD" id="CAL0000199010">
    <property type="gene designation" value="ALS1"/>
</dbReference>
<dbReference type="VEuPathDB" id="FungiDB:C6_03700W_A"/>
<dbReference type="HOGENOM" id="CLU_003114_0_0_1"/>
<dbReference type="InParanoid" id="Q5A8T4"/>
<dbReference type="OrthoDB" id="3981162at2759"/>
<dbReference type="PHI-base" id="PHI:11392"/>
<dbReference type="PRO" id="PR:Q5A8T4"/>
<dbReference type="Proteomes" id="UP000000559">
    <property type="component" value="Chromosome 6"/>
</dbReference>
<dbReference type="GO" id="GO:0009986">
    <property type="term" value="C:cell surface"/>
    <property type="evidence" value="ECO:0000314"/>
    <property type="project" value="CGD"/>
</dbReference>
<dbReference type="GO" id="GO:0005576">
    <property type="term" value="C:extracellular region"/>
    <property type="evidence" value="ECO:0000314"/>
    <property type="project" value="CGD"/>
</dbReference>
<dbReference type="GO" id="GO:1903561">
    <property type="term" value="C:extracellular vesicle"/>
    <property type="evidence" value="ECO:0000318"/>
    <property type="project" value="GO_Central"/>
</dbReference>
<dbReference type="GO" id="GO:0009277">
    <property type="term" value="C:fungal-type cell wall"/>
    <property type="evidence" value="ECO:0000314"/>
    <property type="project" value="CGD"/>
</dbReference>
<dbReference type="GO" id="GO:0030446">
    <property type="term" value="C:hyphal cell wall"/>
    <property type="evidence" value="ECO:0000314"/>
    <property type="project" value="CGD"/>
</dbReference>
<dbReference type="GO" id="GO:0005886">
    <property type="term" value="C:plasma membrane"/>
    <property type="evidence" value="ECO:0007669"/>
    <property type="project" value="UniProtKB-SubCell"/>
</dbReference>
<dbReference type="GO" id="GO:0098552">
    <property type="term" value="C:side of membrane"/>
    <property type="evidence" value="ECO:0007669"/>
    <property type="project" value="UniProtKB-KW"/>
</dbReference>
<dbReference type="GO" id="GO:0030445">
    <property type="term" value="C:yeast-form cell wall"/>
    <property type="evidence" value="ECO:0000314"/>
    <property type="project" value="CGD"/>
</dbReference>
<dbReference type="GO" id="GO:0001968">
    <property type="term" value="F:fibronectin binding"/>
    <property type="evidence" value="ECO:0000314"/>
    <property type="project" value="CGD"/>
</dbReference>
<dbReference type="GO" id="GO:0043236">
    <property type="term" value="F:laminin binding"/>
    <property type="evidence" value="ECO:0000314"/>
    <property type="project" value="CGD"/>
</dbReference>
<dbReference type="GO" id="GO:0042277">
    <property type="term" value="F:peptide binding"/>
    <property type="evidence" value="ECO:0000314"/>
    <property type="project" value="CGD"/>
</dbReference>
<dbReference type="GO" id="GO:0044406">
    <property type="term" value="P:adhesion of symbiont to host"/>
    <property type="evidence" value="ECO:0000315"/>
    <property type="project" value="CGD"/>
</dbReference>
<dbReference type="GO" id="GO:0007155">
    <property type="term" value="P:cell adhesion"/>
    <property type="evidence" value="ECO:0000314"/>
    <property type="project" value="CGD"/>
</dbReference>
<dbReference type="GO" id="GO:0043710">
    <property type="term" value="P:cell adhesion involved in multi-species biofilm formation"/>
    <property type="evidence" value="ECO:0000315"/>
    <property type="project" value="CGD"/>
</dbReference>
<dbReference type="GO" id="GO:0043709">
    <property type="term" value="P:cell adhesion involved in single-species biofilm formation"/>
    <property type="evidence" value="ECO:0000315"/>
    <property type="project" value="CGD"/>
</dbReference>
<dbReference type="GO" id="GO:0098609">
    <property type="term" value="P:cell-cell adhesion"/>
    <property type="evidence" value="ECO:0000314"/>
    <property type="project" value="CGD"/>
</dbReference>
<dbReference type="GO" id="GO:0036244">
    <property type="term" value="P:cellular response to neutral pH"/>
    <property type="evidence" value="ECO:0000315"/>
    <property type="project" value="CGD"/>
</dbReference>
<dbReference type="GO" id="GO:0030447">
    <property type="term" value="P:filamentous growth"/>
    <property type="evidence" value="ECO:0000315"/>
    <property type="project" value="CGD"/>
</dbReference>
<dbReference type="GO" id="GO:0044182">
    <property type="term" value="P:filamentous growth of a population of unicellular organisms"/>
    <property type="evidence" value="ECO:0000315"/>
    <property type="project" value="CGD"/>
</dbReference>
<dbReference type="GO" id="GO:0036178">
    <property type="term" value="P:filamentous growth of a population of unicellular organisms in response to neutral pH"/>
    <property type="evidence" value="ECO:0000315"/>
    <property type="project" value="CGD"/>
</dbReference>
<dbReference type="GO" id="GO:0000128">
    <property type="term" value="P:flocculation"/>
    <property type="evidence" value="ECO:0000315"/>
    <property type="project" value="CGD"/>
</dbReference>
<dbReference type="GO" id="GO:0030448">
    <property type="term" value="P:hyphal growth"/>
    <property type="evidence" value="ECO:0000315"/>
    <property type="project" value="CGD"/>
</dbReference>
<dbReference type="GO" id="GO:0006878">
    <property type="term" value="P:intracellular copper ion homeostasis"/>
    <property type="evidence" value="ECO:0000315"/>
    <property type="project" value="CGD"/>
</dbReference>
<dbReference type="GO" id="GO:0044399">
    <property type="term" value="P:multi-species biofilm formation"/>
    <property type="evidence" value="ECO:0000315"/>
    <property type="project" value="CGD"/>
</dbReference>
<dbReference type="GO" id="GO:1900735">
    <property type="term" value="P:positive regulation of flocculation"/>
    <property type="evidence" value="ECO:0000315"/>
    <property type="project" value="CGD"/>
</dbReference>
<dbReference type="GO" id="GO:0044011">
    <property type="term" value="P:single-species biofilm formation on inanimate substrate"/>
    <property type="evidence" value="ECO:0000318"/>
    <property type="project" value="GO_Central"/>
</dbReference>
<dbReference type="GO" id="GO:0044409">
    <property type="term" value="P:symbiont entry into host"/>
    <property type="evidence" value="ECO:0000314"/>
    <property type="project" value="CGD"/>
</dbReference>
<dbReference type="FunFam" id="2.60.40.1280:FF:000001">
    <property type="entry name" value="Agglutinin-like protein 3"/>
    <property type="match status" value="1"/>
</dbReference>
<dbReference type="FunFam" id="2.60.40.2430:FF:000001">
    <property type="entry name" value="Agglutinin-like protein 3"/>
    <property type="match status" value="1"/>
</dbReference>
<dbReference type="Gene3D" id="2.60.40.1280">
    <property type="match status" value="1"/>
</dbReference>
<dbReference type="Gene3D" id="2.60.40.2430">
    <property type="entry name" value="Agglutinin-like protein, N-terminal domain, N2 subdomain"/>
    <property type="match status" value="1"/>
</dbReference>
<dbReference type="InterPro" id="IPR008966">
    <property type="entry name" value="Adhesion_dom_sf"/>
</dbReference>
<dbReference type="InterPro" id="IPR008440">
    <property type="entry name" value="Agglutinin-like_ALS_rpt"/>
</dbReference>
<dbReference type="InterPro" id="IPR024672">
    <property type="entry name" value="Agglutinin-like_N"/>
</dbReference>
<dbReference type="InterPro" id="IPR043063">
    <property type="entry name" value="Agglutinin-like_N_N2"/>
</dbReference>
<dbReference type="InterPro" id="IPR033504">
    <property type="entry name" value="ALS"/>
</dbReference>
<dbReference type="InterPro" id="IPR011252">
    <property type="entry name" value="Fibrogen-bd_dom1"/>
</dbReference>
<dbReference type="PANTHER" id="PTHR33793:SF2">
    <property type="entry name" value="AGGLUTININ-LIKE PROTEIN 6"/>
    <property type="match status" value="1"/>
</dbReference>
<dbReference type="PANTHER" id="PTHR33793">
    <property type="entry name" value="ALPHA-AGGLUTININ"/>
    <property type="match status" value="1"/>
</dbReference>
<dbReference type="Pfam" id="PF05792">
    <property type="entry name" value="Candida_ALS"/>
    <property type="match status" value="12"/>
</dbReference>
<dbReference type="Pfam" id="PF11766">
    <property type="entry name" value="Candida_ALS_N"/>
    <property type="match status" value="1"/>
</dbReference>
<dbReference type="SMART" id="SM01056">
    <property type="entry name" value="Candida_ALS_N"/>
    <property type="match status" value="1"/>
</dbReference>
<dbReference type="SUPFAM" id="SSF49401">
    <property type="entry name" value="Bacterial adhesins"/>
    <property type="match status" value="1"/>
</dbReference>
<gene>
    <name type="primary">ALS1</name>
    <name type="ordered locus">CAALFM_C603700WA</name>
    <name type="ORF">CaO19.13163</name>
    <name type="ORF">CaO19.5741</name>
</gene>
<sequence>MLQQFTLLFLYLSIASAKTITGVFDSFNSLTWSNAANYAFKGPGYPTWNAVLGWSLDGTSANPGDTFTLNMPCVFKYTTSQTSVDLTADGVKYATCQFYSGEEFTTFSTLTCTVNDALKSSIKAFGTVTLPIAFNVGGTGSSTDLEDSKCFTAGTNTVTFNDGDKDISIDVEFEKSTVDPSGYLYASRVMPSLNKVTTLFVAPQCENGYTSGTMGFSSSNGDVAIDCSNIHIGITKGLNDWNYPVSSESFSYTKTCTSNGIQIKYQNVPAGYRPFIDAYISATDVNQYTLAYTNDYTCAGSRSQSKPFTLRWTGYKNSDAGSNGIVIVATTRTVTDSTTAVTTLPFNPSVDKTKTIEILQPIPTTTITTSYVGVTTSYSTKTAPIGETATVIVDVPYHTTTTVTSEWTGTITTTTTRTNPTDSIDTVVVQVPSPNPTVSTTEYWSQSYATTTTVTAPPGGTDTVIIREPPNHTVTTTEYWSQSFATTTTVTAPPGETDTVIIREPPNHTVTTTEYWSQSYATTTTVTAPPGGTDTVLIREPPNHTVTTTEYWSQSYATTTTVTAPPGGTDTVIIREPPNYTVTTTEYWSQSYATTTTITAPPGETDTVIIREPPNHTVTTTEYWSQSYATTTTVTAPPGGTDTVLIREPPNHTVTTTEYWSQSYATTTTVTAPPGGTDTVLIREPPNHTVTTTEYWSQSYATTTTVTAPPGGTDTVIIREPPNHTVTTTEYWSQSYATTTTVTAPPGGTDTVIIREPPNYTVTTTEYWSQSFATTTTVTAPPGGTDTVIIYESMSSSKISTSSNDITSIIPSFSRPHYVNSTTSDLSTFESSSMNTPTSISSDGMLLSSTTLVTESETTTESICSDGKECSRLSSSSGIVTNPDSNESSIVTSTVPTASTMSDSLSSTDGISATSSDNVSKSGVSVTTETSVTTIQTTPNPLSSSVTSLTQLSSIPSVSESESKVTFTSNGDNQSGTHDSQSTSTEIEIVTTSSTKVLPPVVSSNTDLTSEPTNTREQPTTLSTTSNSITEDITTSQPTGDNGDNTSSTNPVPTVATSTLASASEEDNKSGSHESASTSLKPSMGENSGLTTSTEIEATTTSPTEAPSPAVSSGTDVTTEPTDTREQPTTLSTTSKTNSESVATTQATNENGGKSPSTDLTSSLTTGTSASTSANSELVTSGSVTGGAVASASNDQSHSTSVTNSNSIVSNTPQTTLSQQVTSSSPSTNTFIASTYDGSGSIIQHSTWLYGLITLLSLFI</sequence>
<organism>
    <name type="scientific">Candida albicans (strain SC5314 / ATCC MYA-2876)</name>
    <name type="common">Yeast</name>
    <dbReference type="NCBI Taxonomy" id="237561"/>
    <lineage>
        <taxon>Eukaryota</taxon>
        <taxon>Fungi</taxon>
        <taxon>Dikarya</taxon>
        <taxon>Ascomycota</taxon>
        <taxon>Saccharomycotina</taxon>
        <taxon>Pichiomycetes</taxon>
        <taxon>Debaryomycetaceae</taxon>
        <taxon>Candida/Lodderomyces clade</taxon>
        <taxon>Candida</taxon>
    </lineage>
</organism>
<accession>Q5A8T4</accession>
<accession>A0A1D8PQ83</accession>
<accession>Q5A8L0</accession>
<comment type="function">
    <text evidence="4 5 6 7 8 12 13 15 24 26 27 28 30">Major cell surface adhesion protein which mediates both yeast-to-host tissue adherence and yeast aggregation. Acts as a downstream effector of the EFG1 regulatory pathway. Required for rapamycin-induced aggregation of C.albicans. Binds glycans and mediates adherence to endothelial and epithelial cells, thereby playing an important role in the pathogenesis of C.albicans infections.</text>
</comment>
<comment type="subcellular location">
    <subcellularLocation>
        <location>Cell membrane</location>
        <topology evidence="9 33">Lipid-anchor</topology>
        <topology evidence="9 33">GPI-anchor</topology>
    </subcellularLocation>
    <subcellularLocation>
        <location evidence="17 21 22 25">Secreted</location>
        <location evidence="17 21 22 25">Cell wall</location>
    </subcellularLocation>
    <text evidence="9 25 33">Identified as covalently-linked GPI-modified cell wall protein (GPI-CWP) in the outer cell wall layer (Probable) (PubMed:15302828). Covers the germ tube as well as the cell surface with the exception of bud scars (PubMed:22106872).</text>
</comment>
<comment type="induction">
    <text evidence="10 11 14 16 18 20 22 23 24 29 30">Highly expressed in biofilms with down-regulation during later stages of biofilm formation. Expression is repressed by TPK1 and SFL1, and induced by TPK2. Also under the control of TOR1. Down-regulated by Riccardin D, a macrocyclic bisbibenzyl isolated from Chinese liverwort D.hirsute which has an inhibitory effect on biofilms and virulence. Induced by caspofungin.</text>
</comment>
<comment type="domain">
    <text evidence="8 19 31">Each ALS protein has a similar three-domain structure, including a N-ter domain of 433-436 amino acids that is 55-90 percent identical across the family and which mediates adherence to various materials; a central domain of variable numbers of tandemly repeated copies of a 36 amino acid motif; and a C-ter domain that is relatively variable in length and sequence across the family.</text>
</comment>
<comment type="PTM">
    <text evidence="33">The GPI-anchor is attached to the protein in the endoplasmic reticulum and serves to target the protein to the cell surface. There, the glucosamine-inositol phospholipid moiety is cleaved off and the GPI-modified mannoprotein is covalently attached via its lipidless GPI glycan remnant to the 1,6-beta-glucan of the outer cell wall layer.</text>
</comment>
<comment type="similarity">
    <text evidence="32">Belongs to the ALS family.</text>
</comment>
<proteinExistence type="evidence at protein level"/>
<protein>
    <recommendedName>
        <fullName>Agglutinin-like protein 1</fullName>
    </recommendedName>
    <alternativeName>
        <fullName>Adhesin 1</fullName>
    </alternativeName>
</protein>
<evidence type="ECO:0000250" key="1">
    <source>
        <dbReference type="UniProtKB" id="A0A1D8PQ86"/>
    </source>
</evidence>
<evidence type="ECO:0000255" key="2"/>
<evidence type="ECO:0000256" key="3">
    <source>
        <dbReference type="SAM" id="MobiDB-lite"/>
    </source>
</evidence>
<evidence type="ECO:0000269" key="4">
    <source>
    </source>
</evidence>
<evidence type="ECO:0000269" key="5">
    <source>
    </source>
</evidence>
<evidence type="ECO:0000269" key="6">
    <source>
    </source>
</evidence>
<evidence type="ECO:0000269" key="7">
    <source>
    </source>
</evidence>
<evidence type="ECO:0000269" key="8">
    <source>
    </source>
</evidence>
<evidence type="ECO:0000269" key="9">
    <source>
    </source>
</evidence>
<evidence type="ECO:0000269" key="10">
    <source>
    </source>
</evidence>
<evidence type="ECO:0000269" key="11">
    <source>
    </source>
</evidence>
<evidence type="ECO:0000269" key="12">
    <source>
    </source>
</evidence>
<evidence type="ECO:0000269" key="13">
    <source>
    </source>
</evidence>
<evidence type="ECO:0000269" key="14">
    <source>
    </source>
</evidence>
<evidence type="ECO:0000269" key="15">
    <source>
    </source>
</evidence>
<evidence type="ECO:0000269" key="16">
    <source>
    </source>
</evidence>
<evidence type="ECO:0000269" key="17">
    <source>
    </source>
</evidence>
<evidence type="ECO:0000269" key="18">
    <source>
    </source>
</evidence>
<evidence type="ECO:0000269" key="19">
    <source>
    </source>
</evidence>
<evidence type="ECO:0000269" key="20">
    <source>
    </source>
</evidence>
<evidence type="ECO:0000269" key="21">
    <source>
    </source>
</evidence>
<evidence type="ECO:0000269" key="22">
    <source>
    </source>
</evidence>
<evidence type="ECO:0000269" key="23">
    <source>
    </source>
</evidence>
<evidence type="ECO:0000269" key="24">
    <source>
    </source>
</evidence>
<evidence type="ECO:0000269" key="25">
    <source>
    </source>
</evidence>
<evidence type="ECO:0000269" key="26">
    <source>
    </source>
</evidence>
<evidence type="ECO:0000269" key="27">
    <source>
    </source>
</evidence>
<evidence type="ECO:0000269" key="28">
    <source>
    </source>
</evidence>
<evidence type="ECO:0000269" key="29">
    <source>
    </source>
</evidence>
<evidence type="ECO:0000269" key="30">
    <source>
    </source>
</evidence>
<evidence type="ECO:0000269" key="31">
    <source>
    </source>
</evidence>
<evidence type="ECO:0000305" key="32"/>
<evidence type="ECO:0000305" key="33">
    <source>
    </source>
</evidence>
<feature type="signal peptide" evidence="2">
    <location>
        <begin position="1"/>
        <end position="17"/>
    </location>
</feature>
<feature type="chain" id="PRO_0000420218" description="Agglutinin-like protein 1">
    <location>
        <begin position="18"/>
        <end position="1238"/>
    </location>
</feature>
<feature type="propeptide" id="PRO_0000420219" description="Removed in mature form" evidence="2">
    <location>
        <begin position="1239"/>
        <end position="1260"/>
    </location>
</feature>
<feature type="repeat" description="ALS 1">
    <location>
        <begin position="365"/>
        <end position="396"/>
    </location>
</feature>
<feature type="repeat" description="ALS 2">
    <location>
        <begin position="401"/>
        <end position="432"/>
    </location>
</feature>
<feature type="repeat" description="ALS 3">
    <location>
        <begin position="438"/>
        <end position="469"/>
    </location>
</feature>
<feature type="repeat" description="ALS 4">
    <location>
        <begin position="474"/>
        <end position="505"/>
    </location>
</feature>
<feature type="repeat" description="ALS 5">
    <location>
        <begin position="510"/>
        <end position="541"/>
    </location>
</feature>
<feature type="repeat" description="ALS 6">
    <location>
        <begin position="546"/>
        <end position="577"/>
    </location>
</feature>
<feature type="repeat" description="ALS 7">
    <location>
        <begin position="582"/>
        <end position="613"/>
    </location>
</feature>
<feature type="repeat" description="ALS 8">
    <location>
        <begin position="618"/>
        <end position="649"/>
    </location>
</feature>
<feature type="repeat" description="ALS 9">
    <location>
        <begin position="654"/>
        <end position="685"/>
    </location>
</feature>
<feature type="repeat" description="ALS 10">
    <location>
        <begin position="690"/>
        <end position="721"/>
    </location>
</feature>
<feature type="repeat" description="ALS 11">
    <location>
        <begin position="726"/>
        <end position="757"/>
    </location>
</feature>
<feature type="repeat" description="ALS 12">
    <location>
        <begin position="762"/>
        <end position="791"/>
    </location>
</feature>
<feature type="region of interest" description="Disordered" evidence="3">
    <location>
        <begin position="896"/>
        <end position="924"/>
    </location>
</feature>
<feature type="region of interest" description="Disordered" evidence="3">
    <location>
        <begin position="954"/>
        <end position="1226"/>
    </location>
</feature>
<feature type="compositionally biased region" description="Polar residues" evidence="3">
    <location>
        <begin position="896"/>
        <end position="918"/>
    </location>
</feature>
<feature type="compositionally biased region" description="Polar residues" evidence="3">
    <location>
        <begin position="964"/>
        <end position="979"/>
    </location>
</feature>
<feature type="compositionally biased region" description="Low complexity" evidence="3">
    <location>
        <begin position="980"/>
        <end position="995"/>
    </location>
</feature>
<feature type="compositionally biased region" description="Polar residues" evidence="3">
    <location>
        <begin position="1002"/>
        <end position="1062"/>
    </location>
</feature>
<feature type="compositionally biased region" description="Polar residues" evidence="3">
    <location>
        <begin position="1073"/>
        <end position="1090"/>
    </location>
</feature>
<feature type="compositionally biased region" description="Low complexity" evidence="3">
    <location>
        <begin position="1091"/>
        <end position="1110"/>
    </location>
</feature>
<feature type="compositionally biased region" description="Polar residues" evidence="3">
    <location>
        <begin position="1111"/>
        <end position="1154"/>
    </location>
</feature>
<feature type="compositionally biased region" description="Low complexity" evidence="3">
    <location>
        <begin position="1155"/>
        <end position="1176"/>
    </location>
</feature>
<feature type="compositionally biased region" description="Low complexity" evidence="3">
    <location>
        <begin position="1197"/>
        <end position="1226"/>
    </location>
</feature>
<feature type="lipid moiety-binding region" description="GPI-anchor amidated glycine" evidence="2">
    <location>
        <position position="1238"/>
    </location>
</feature>
<feature type="glycosylation site" description="N-linked (GlcNAc...) asparagine" evidence="2">
    <location>
        <position position="471"/>
    </location>
</feature>
<feature type="glycosylation site" description="N-linked (GlcNAc...) asparagine" evidence="2">
    <location>
        <position position="507"/>
    </location>
</feature>
<feature type="glycosylation site" description="N-linked (GlcNAc...) asparagine" evidence="2">
    <location>
        <position position="543"/>
    </location>
</feature>
<feature type="glycosylation site" description="N-linked (GlcNAc...) asparagine" evidence="2">
    <location>
        <position position="579"/>
    </location>
</feature>
<feature type="glycosylation site" description="N-linked (GlcNAc...) asparagine" evidence="2">
    <location>
        <position position="615"/>
    </location>
</feature>
<feature type="glycosylation site" description="N-linked (GlcNAc...) asparagine" evidence="2">
    <location>
        <position position="651"/>
    </location>
</feature>
<feature type="glycosylation site" description="N-linked (GlcNAc...) asparagine" evidence="2">
    <location>
        <position position="687"/>
    </location>
</feature>
<feature type="glycosylation site" description="N-linked (GlcNAc...) asparagine" evidence="2">
    <location>
        <position position="723"/>
    </location>
</feature>
<feature type="glycosylation site" description="N-linked (GlcNAc...) asparagine" evidence="2">
    <location>
        <position position="759"/>
    </location>
</feature>
<feature type="glycosylation site" description="N-linked (GlcNAc...) asparagine" evidence="2">
    <location>
        <position position="820"/>
    </location>
</feature>
<feature type="glycosylation site" description="N-linked (GlcNAc...) asparagine" evidence="2">
    <location>
        <position position="886"/>
    </location>
</feature>
<feature type="glycosylation site" description="N-linked (GlcNAc...) asparagine" evidence="2">
    <location>
        <position position="918"/>
    </location>
</feature>
<feature type="glycosylation site" description="N-linked (GlcNAc...) asparagine" evidence="2">
    <location>
        <position position="973"/>
    </location>
</feature>
<feature type="glycosylation site" description="N-linked (GlcNAc...) asparagine" evidence="2">
    <location>
        <position position="1045"/>
    </location>
</feature>
<feature type="glycosylation site" description="N-linked (GlcNAc...) asparagine" evidence="2">
    <location>
        <position position="1068"/>
    </location>
</feature>
<feature type="disulfide bond" evidence="1">
    <location>
        <begin position="73"/>
        <end position="150"/>
    </location>
</feature>
<feature type="disulfide bond" evidence="1">
    <location>
        <begin position="96"/>
        <end position="112"/>
    </location>
</feature>
<feature type="disulfide bond" evidence="1">
    <location>
        <begin position="205"/>
        <end position="298"/>
    </location>
</feature>
<feature type="disulfide bond" evidence="1">
    <location>
        <begin position="227"/>
        <end position="256"/>
    </location>
</feature>
<keyword id="KW-0130">Cell adhesion</keyword>
<keyword id="KW-1003">Cell membrane</keyword>
<keyword id="KW-0134">Cell wall</keyword>
<keyword id="KW-1015">Disulfide bond</keyword>
<keyword id="KW-0325">Glycoprotein</keyword>
<keyword id="KW-0336">GPI-anchor</keyword>
<keyword id="KW-0449">Lipoprotein</keyword>
<keyword id="KW-0472">Membrane</keyword>
<keyword id="KW-1185">Reference proteome</keyword>
<keyword id="KW-0677">Repeat</keyword>
<keyword id="KW-0964">Secreted</keyword>
<keyword id="KW-0732">Signal</keyword>
<keyword id="KW-0843">Virulence</keyword>
<reference key="1">
    <citation type="journal article" date="2004" name="Proc. Natl. Acad. Sci. U.S.A.">
        <title>The diploid genome sequence of Candida albicans.</title>
        <authorList>
            <person name="Jones T."/>
            <person name="Federspiel N.A."/>
            <person name="Chibana H."/>
            <person name="Dungan J."/>
            <person name="Kalman S."/>
            <person name="Magee B.B."/>
            <person name="Newport G."/>
            <person name="Thorstenson Y.R."/>
            <person name="Agabian N."/>
            <person name="Magee P.T."/>
            <person name="Davis R.W."/>
            <person name="Scherer S."/>
        </authorList>
    </citation>
    <scope>NUCLEOTIDE SEQUENCE [LARGE SCALE GENOMIC DNA]</scope>
    <source>
        <strain>SC5314 / ATCC MYA-2876</strain>
    </source>
</reference>
<reference key="2">
    <citation type="journal article" date="2007" name="Genome Biol.">
        <title>Assembly of the Candida albicans genome into sixteen supercontigs aligned on the eight chromosomes.</title>
        <authorList>
            <person name="van het Hoog M."/>
            <person name="Rast T.J."/>
            <person name="Martchenko M."/>
            <person name="Grindle S."/>
            <person name="Dignard D."/>
            <person name="Hogues H."/>
            <person name="Cuomo C."/>
            <person name="Berriman M."/>
            <person name="Scherer S."/>
            <person name="Magee B.B."/>
            <person name="Whiteway M."/>
            <person name="Chibana H."/>
            <person name="Nantel A."/>
            <person name="Magee P.T."/>
        </authorList>
    </citation>
    <scope>GENOME REANNOTATION</scope>
    <source>
        <strain>SC5314 / ATCC MYA-2876</strain>
    </source>
</reference>
<reference key="3">
    <citation type="journal article" date="2013" name="Genome Biol.">
        <title>Assembly of a phased diploid Candida albicans genome facilitates allele-specific measurements and provides a simple model for repeat and indel structure.</title>
        <authorList>
            <person name="Muzzey D."/>
            <person name="Schwartz K."/>
            <person name="Weissman J.S."/>
            <person name="Sherlock G."/>
        </authorList>
    </citation>
    <scope>NUCLEOTIDE SEQUENCE [LARGE SCALE GENOMIC DNA]</scope>
    <scope>GENOME REANNOTATION</scope>
    <source>
        <strain>SC5314 / ATCC MYA-2876</strain>
    </source>
</reference>
<reference key="4">
    <citation type="journal article" date="1995" name="Mol. Microbiol.">
        <title>Candida albicans ALS1: domains related to a Saccharomyces cerevisiae sexual agglutinin separated by a repeating motif.</title>
        <authorList>
            <person name="Hoyer L.L."/>
            <person name="Scherer S."/>
            <person name="Shatzman A.R."/>
            <person name="Livi G.P."/>
        </authorList>
    </citation>
    <scope>DOMAIN</scope>
</reference>
<reference key="5">
    <citation type="journal article" date="1999" name="Infect. Immun.">
        <title>Detection of Als proteins on the cell wall of Candida albicans in murine tissues.</title>
        <authorList>
            <person name="Hoyer L.L."/>
            <person name="Clevenger J."/>
            <person name="Hecht J.E."/>
            <person name="Ehrhart E.J."/>
            <person name="Poulet F.M."/>
        </authorList>
    </citation>
    <scope>SUBCELLULAR LOCATION</scope>
</reference>
<reference key="6">
    <citation type="journal article" date="2002" name="Infect. Immun.">
        <title>Contribution of Candida albicans ALS1 to the pathogenesis of experimental oropharyngeal candidiasis.</title>
        <authorList>
            <person name="Kamai Y."/>
            <person name="Kubota M."/>
            <person name="Kamai Y."/>
            <person name="Hosokawa T."/>
            <person name="Fukuoka T."/>
            <person name="Filler S.G."/>
        </authorList>
    </citation>
    <scope>FUNCTION</scope>
</reference>
<reference key="7">
    <citation type="journal article" date="2002" name="Mol. Microbiol.">
        <title>Candida albicans Als1p: an adhesin that is a downstream effector of the EFG1 filamentation pathway.</title>
        <authorList>
            <person name="Fu Y."/>
            <person name="Ibrahim A.S."/>
            <person name="Sheppard D.C."/>
            <person name="Chen Y.C."/>
            <person name="French S.W."/>
            <person name="Cutler J.E."/>
            <person name="Filler S.G."/>
            <person name="Edwards J.E. Jr."/>
        </authorList>
    </citation>
    <scope>FUNCTION</scope>
</reference>
<reference key="8">
    <citation type="journal article" date="2003" name="Yeast">
        <title>Genome-wide identification of fungal GPI proteins.</title>
        <authorList>
            <person name="De Groot P.W."/>
            <person name="Hellingwerf K.J."/>
            <person name="Klis F.M."/>
        </authorList>
    </citation>
    <scope>PREDICTION OF GPI-ANCHOR</scope>
</reference>
<reference key="9">
    <citation type="journal article" date="2004" name="Eukaryot. Cell">
        <title>Proteomic analysis of Candida albicans cell walls reveals covalently bound carbohydrate-active enzymes and adhesins.</title>
        <authorList>
            <person name="de Groot P.W."/>
            <person name="de Boer A.D."/>
            <person name="Cunningham J."/>
            <person name="Dekker H.L."/>
            <person name="de Jong L."/>
            <person name="Hellingwerf K.J."/>
            <person name="de Koster C."/>
            <person name="Klis F.M."/>
        </authorList>
    </citation>
    <scope>IDENTIFICATION BY MASS SPECTROSCOPY</scope>
    <scope>SUBCELLULAR LOCATION</scope>
</reference>
<reference key="10">
    <citation type="journal article" date="2004" name="Infect. Immun.">
        <title>Degenerate peptide recognition by Candida albicans adhesins Als5p and Als1p.</title>
        <authorList>
            <person name="Klotz S.A."/>
            <person name="Gaur N.K."/>
            <person name="Lake D.F."/>
            <person name="Chan V."/>
            <person name="Rauceo J."/>
            <person name="Lipke P.N."/>
        </authorList>
    </citation>
    <scope>FUNCTION</scope>
</reference>
<reference key="11">
    <citation type="journal article" date="2004" name="J. Biol. Chem.">
        <title>Functional and structural diversity in the Als protein family of Candida albicans.</title>
        <authorList>
            <person name="Sheppard D.C."/>
            <person name="Yeaman M.R."/>
            <person name="Welch W.H."/>
            <person name="Phan Q.T."/>
            <person name="Fu Y."/>
            <person name="Ibrahim A.S."/>
            <person name="Filler S.G."/>
            <person name="Zhang M."/>
            <person name="Waring A.J."/>
            <person name="Edwards J.E. Jr."/>
        </authorList>
    </citation>
    <scope>FUNCTION</scope>
    <scope>DOMAIN</scope>
</reference>
<reference key="12">
    <citation type="journal article" date="2004" name="Yeast">
        <title>Functional analysis of the Candida albicans ALS1 gene product.</title>
        <authorList>
            <person name="Loza L."/>
            <person name="Fu Y."/>
            <person name="Ibrahim A.S."/>
            <person name="Sheppard D.C."/>
            <person name="Filler S.G."/>
            <person name="Edwards J.E. Jr."/>
        </authorList>
    </citation>
    <scope>FUNCTION</scope>
</reference>
<reference key="13">
    <citation type="journal article" date="2005" name="Infect. Immun.">
        <title>Use of green fluorescent protein and reverse transcription-PCR to monitor Candida albicans agglutinin-like sequence gene expression in a murine model of disseminated candidiasis.</title>
        <authorList>
            <person name="Green C.B."/>
            <person name="Zhao X."/>
            <person name="Hoyer L.L."/>
        </authorList>
    </citation>
    <scope>INDUCTION</scope>
</reference>
<reference key="14">
    <citation type="journal article" date="2005" name="Mol. Cell. Probes">
        <title>Quantification of ALS1 gene expression in Candida albicans biofilms by RT-PCR using hybridisation probes on the LightCycler.</title>
        <authorList>
            <person name="O'Connor L."/>
            <person name="Lahiff S."/>
            <person name="Casey F."/>
            <person name="Glennon M."/>
            <person name="Cormican M."/>
            <person name="Maher M."/>
        </authorList>
    </citation>
    <scope>INDUCTION</scope>
</reference>
<reference key="15">
    <citation type="journal article" date="2006" name="PLoS Pathog.">
        <title>Critical role of Bcr1-dependent adhesins in C. albicans biofilm formation in vitro and in vivo.</title>
        <authorList>
            <person name="Nobile C.J."/>
            <person name="Andes D.R."/>
            <person name="Nett J.E."/>
            <person name="Smith F.J."/>
            <person name="Yue F."/>
            <person name="Phan Q.T."/>
            <person name="Edwards J.E."/>
            <person name="Filler S.G."/>
            <person name="Mitchell A.P."/>
        </authorList>
    </citation>
    <scope>FUNCTION</scope>
</reference>
<reference key="16">
    <citation type="journal article" date="2007" name="Eukaryot. Cell">
        <title>Candida albicans Sfl1 suppresses flocculation and filamentation.</title>
        <authorList>
            <person name="Bauer J."/>
            <person name="Wendland J."/>
        </authorList>
    </citation>
    <scope>INDUCTION</scope>
</reference>
<reference key="17">
    <citation type="journal article" date="2007" name="Med. Mycol.">
        <title>Candida albicans Als proteins mediate aggregation with bacteria and yeasts.</title>
        <authorList>
            <person name="Klotz S.A."/>
            <person name="Gaur N.K."/>
            <person name="De Armond R."/>
            <person name="Sheppard D."/>
            <person name="Khardori N."/>
            <person name="Edwards J.E. Jr."/>
            <person name="Lipke P.N."/>
            <person name="El-Azizi M."/>
        </authorList>
    </citation>
    <scope>FUNCTION</scope>
</reference>
<reference key="18">
    <citation type="journal article" date="2008" name="Curr. Biol.">
        <title>Complementary adhesin function in C. albicans biofilm formation.</title>
        <authorList>
            <person name="Nobile C.J."/>
            <person name="Schneider H.A."/>
            <person name="Nett J.E."/>
            <person name="Sheppard D.C."/>
            <person name="Filler S.G."/>
            <person name="Andes D.R."/>
            <person name="Mitchell A.P."/>
        </authorList>
    </citation>
    <scope>FUNCTION</scope>
</reference>
<reference key="19">
    <citation type="journal article" date="2008" name="Proteomics">
        <title>A study of the Candida albicans cell wall proteome.</title>
        <authorList>
            <person name="Castillo L."/>
            <person name="Calvo E."/>
            <person name="Martinez A.I."/>
            <person name="Ruiz-Herrera J."/>
            <person name="Valentin E."/>
            <person name="Lopez J.A."/>
            <person name="Sentandreu R."/>
        </authorList>
    </citation>
    <scope>IDENTIFICATION BY MASS SPECTROMETRY</scope>
    <scope>SUBCELLULAR LOCATION</scope>
</reference>
<reference key="20">
    <citation type="journal article" date="2009" name="Mycopathologia">
        <title>Monitoring ALS1 and ALS3 gene expression during in vitro Candida albicans biofilm formation under continuous flow conditions.</title>
        <authorList>
            <person name="Nailis H."/>
            <person name="Vandenbroucke R."/>
            <person name="Tilleman K."/>
            <person name="Deforce D."/>
            <person name="Nelis H."/>
            <person name="Coenye T."/>
        </authorList>
    </citation>
    <scope>INDUCTION</scope>
</reference>
<reference key="21">
    <citation type="journal article" date="2009" name="PLoS Pathog.">
        <title>The protein kinase Tor1 regulates adhesin gene expression in Candida albicans.</title>
        <authorList>
            <person name="Bastidas R.J."/>
            <person name="Heitman J."/>
            <person name="Cardenas M.E."/>
        </authorList>
    </citation>
    <scope>INDUCTION</scope>
</reference>
<reference key="22">
    <citation type="journal article" date="2010" name="BMC Microbiol.">
        <title>Real-time PCR expression profiling of genes encoding potential virulence factors in Candida albicans biofilms: identification of model-dependent and -independent gene expression.</title>
        <authorList>
            <person name="Nailis H."/>
            <person name="Kucharikova S."/>
            <person name="Ricicova M."/>
            <person name="Van Dijck P."/>
            <person name="Deforce D."/>
            <person name="Nelis H."/>
            <person name="Coenye T."/>
        </authorList>
    </citation>
    <scope>INDUCTION</scope>
</reference>
<reference key="23">
    <citation type="journal article" date="2010" name="Eukaryot. Cell">
        <title>Structure and function of glycosylated tandem repeats from Candida albicans Als adhesins.</title>
        <authorList>
            <person name="Frank A.T."/>
            <person name="Ramsook C.B."/>
            <person name="Otoo H.N."/>
            <person name="Tan C."/>
            <person name="Soybelman G."/>
            <person name="Rauceo J.M."/>
            <person name="Gaur N.K."/>
            <person name="Klotz S.A."/>
            <person name="Lipke P.N."/>
        </authorList>
    </citation>
    <scope>DOMAIN</scope>
</reference>
<reference key="24">
    <citation type="journal article" date="2010" name="Microbiology">
        <title>Heterogeneous distribution of Candida albicans cell-surface antigens demonstrated with an Als1-specific monoclonal antibody.</title>
        <authorList>
            <person name="Coleman D.A."/>
            <person name="Oh S.H."/>
            <person name="Zhao X."/>
            <person name="Hoyer L.L."/>
        </authorList>
    </citation>
    <scope>SUBCELLULAR LOCATION</scope>
</reference>
<reference key="25">
    <citation type="journal article" date="2011" name="Eukaryot. Cell">
        <title>Efg1 Controls caspofungin-induced cell aggregation of Candida albicans through the adhesin Als1.</title>
        <authorList>
            <person name="Gregori C."/>
            <person name="Glaser W."/>
            <person name="Frohner I.E."/>
            <person name="Reinoso-Martin C."/>
            <person name="Rupp S."/>
            <person name="Schuller C."/>
            <person name="Kuchler K."/>
        </authorList>
    </citation>
    <scope>FUNCTION</scope>
    <scope>INDUCTION</scope>
</reference>
<reference key="26">
    <citation type="journal article" date="2011" name="Microbiology">
        <title>Mass spectrometric quantification of the adaptations in the wall proteome of Candida albicans in response to ambient pH.</title>
        <authorList>
            <person name="Sosinska G.J."/>
            <person name="de Koning L.J."/>
            <person name="de Groot P.W."/>
            <person name="Manders E.M."/>
            <person name="Dekker H.L."/>
            <person name="Hellingwerf K.J."/>
            <person name="de Koster C.G."/>
            <person name="Klis F.M."/>
        </authorList>
    </citation>
    <scope>SUBCELLULAR LOCATION</scope>
    <scope>IDENTIFICATION BY MASS SPECTROMETRY</scope>
    <scope>INDUCTION</scope>
</reference>
<reference key="27">
    <citation type="journal article" date="2011" name="Mol. Microbiol.">
        <title>The N-terminal part of Als1 protein from Candida albicans specifically binds fucose-containing glycans.</title>
        <authorList>
            <person name="Donohue D.S."/>
            <person name="Ielasi F.S."/>
            <person name="Goossens K.V."/>
            <person name="Willaert R.G."/>
        </authorList>
    </citation>
    <scope>GLYCAN-BINDING</scope>
</reference>
<reference key="28">
    <citation type="journal article" date="2011" name="Yeast">
        <title>Candida albicans Tpk1p and Tpk2p isoforms differentially regulate pseudohyphal development, biofilm structure, cell aggregation and adhesins expression.</title>
        <authorList>
            <person name="Giacometti R."/>
            <person name="Kronberg F."/>
            <person name="Biondi R.M."/>
            <person name="Passeron S."/>
        </authorList>
    </citation>
    <scope>INDUCTION</scope>
</reference>
<reference key="29">
    <citation type="journal article" date="2012" name="FEMS Immunol. Med. Microbiol.">
        <title>A monoclonal antibody specific for Candida albicans Als4 demonstrates overlapping localization of Als family proteins on the fungal cell surface and highlights differences between Als localization in vitro and in vivo.</title>
        <authorList>
            <person name="Coleman D.A."/>
            <person name="Oh S.H."/>
            <person name="Manfra-Maretta S.L."/>
            <person name="Hoyer L.L."/>
        </authorList>
    </citation>
    <scope>SUBCELLULAR LOCATION</scope>
</reference>
<reference key="30">
    <citation type="journal article" date="2012" name="FEMS Immunol. Med. Microbiol.">
        <title>Profiling of adhesive properties of the agglutinin-like sequence (ALS) protein family, a virulent attribute of Candida albicans.</title>
        <authorList>
            <person name="Aoki W."/>
            <person name="Kitahara N."/>
            <person name="Miura N."/>
            <person name="Morisaka H."/>
            <person name="Kuroda K."/>
            <person name="Ueda M."/>
        </authorList>
    </citation>
    <scope>FUNCTION</scope>
</reference>
<reference key="31">
    <citation type="journal article" date="2012" name="Mol. Microbiol.">
        <title>Functional control of the Candida albicans cell wall by catalytic protein kinase A subunit Tpk1.</title>
        <authorList>
            <person name="Fanning S."/>
            <person name="Xu W."/>
            <person name="Beaurepaire C."/>
            <person name="Suhan J.P."/>
            <person name="Nantel A."/>
            <person name="Mitchell A.P."/>
        </authorList>
    </citation>
    <scope>FUNCTION</scope>
    <scope>INDUCTION</scope>
</reference>
<reference key="32">
    <citation type="journal article" date="2012" name="Mycoses">
        <title>Frequency and expression of ALS and HWP1 genotypes in Candida albicans strains isolated from Mexican patients suffering from vaginal candidosis.</title>
        <authorList>
            <person name="Monroy-Perez E."/>
            <person name="Sainz-Espunes T."/>
            <person name="Paniagua-Contreras G."/>
            <person name="Negrete-Abascal E."/>
            <person name="Rodriguez-Moctezuma J.R."/>
            <person name="Vaca S."/>
        </authorList>
    </citation>
    <scope>FUNCTION</scope>
</reference>
<reference key="33">
    <citation type="journal article" date="2012" name="PLoS ONE">
        <title>In vivo inhibitory effect on the biofilm formation of Candida albicans by liverwort derived riccardin D.</title>
        <authorList>
            <person name="Li Y."/>
            <person name="Ma Y."/>
            <person name="Zhang L."/>
            <person name="Guo F."/>
            <person name="Ren L."/>
            <person name="Yang R."/>
            <person name="Li Y."/>
            <person name="Lou H."/>
        </authorList>
    </citation>
    <scope>INDUCTION</scope>
</reference>
<reference key="34">
    <citation type="journal article" date="2012" name="PLoS Pathog.">
        <title>Portrait of Candida albicans adherence regulators.</title>
        <authorList>
            <person name="Finkel J.S."/>
            <person name="Xu W."/>
            <person name="Huang D."/>
            <person name="Hill E.M."/>
            <person name="Desai J.V."/>
            <person name="Woolford C.A."/>
            <person name="Nett J.E."/>
            <person name="Taff H."/>
            <person name="Norice C.T."/>
            <person name="Andes D.R."/>
            <person name="Lanni F."/>
            <person name="Mitchell A.P."/>
        </authorList>
    </citation>
    <scope>FUNCTION</scope>
</reference>